<name>CLPB_STAES</name>
<sequence length="869" mass="98187">MDINQMTYAVQGALQKAVAYSKEYELQNIEVEALLKAAMNENDSLFKSILERANIDVDQLIKAYDNQLSHYPTVQGDNVQYGQYISAKTNELLDKAEKYMKSYEDEFISMEHILRAAIDTDETTQKWVGNKVEVIKEIITKVRGGNHVTSQNPEVNYEALEKYGRDLVEEVRQGKMDPVIGRDEEIRNTIRILSRKTKNNPVLIGEPGVGKTAIVEGLAQRIVRKDVPESLLDKTIFELDLSALVAGAKYRGEFEERLKAVLKEVKESEGRIILFIDEIHMLVGAGKTDGAMDAGNMLKPMLARGELHCIGATTLNEYREYIEKDSALERRFQKVGVSEPDVEDTISILRGLKERYEVYHGVRIQDRALVAAAELSDRYITDRFLPDKAIDLVDQACATIRTEMGSNPTELDQVNRRVMQLEIEESALKNESDNASKHRLEELQEELSNEKEKQSSLKSRVEQEKEKIAKVQEKRAELDSSRQALEDAQTEGNLEKAAELQYGTIPQLEKELQEFEEAFQDETGEDSERMIREVVSDEEIGDIVSQWTGIPVSKLVETEREKLLSLSDILHKRVVGQDKAVDLVSDAVVRARAGIKDPNRPIGSFLFLGPTGVGKTELAKSLASSLFDSEKHMIRIDMSEYMEKHAVSRLIGAPPGYVGHDEGGQLTEAVRRNPYSVILLDEVEKAHSDVFNVLLQILDEGRLTDSKGRSVDFKNTIIIMTSNIGSQVLLENVKDAGEISDDTEKAVMDSLHAYFKPEILNRMDDIVLFKPLSVNDMSMIVDKILTQLNMRLLDQHISIEVTEEAKKWLGEEAYEPQFGARPLKRFVQRQIETPIARMMIKESLPEGTIIKVDLNDNKELDFKVVKPTS</sequence>
<protein>
    <recommendedName>
        <fullName>Chaperone protein ClpB</fullName>
    </recommendedName>
</protein>
<feature type="chain" id="PRO_0000191181" description="Chaperone protein ClpB">
    <location>
        <begin position="1"/>
        <end position="869"/>
    </location>
</feature>
<feature type="domain" description="Clp R" evidence="2">
    <location>
        <begin position="3"/>
        <end position="145"/>
    </location>
</feature>
<feature type="region of interest" description="Repeat 1" evidence="2">
    <location>
        <begin position="6"/>
        <end position="71"/>
    </location>
</feature>
<feature type="region of interest" description="Repeat 2" evidence="2">
    <location>
        <begin position="85"/>
        <end position="145"/>
    </location>
</feature>
<feature type="region of interest" description="NBD1" evidence="1">
    <location>
        <begin position="158"/>
        <end position="339"/>
    </location>
</feature>
<feature type="region of interest" description="Linker" evidence="1">
    <location>
        <begin position="340"/>
        <end position="549"/>
    </location>
</feature>
<feature type="region of interest" description="Disordered" evidence="3">
    <location>
        <begin position="442"/>
        <end position="465"/>
    </location>
</feature>
<feature type="region of interest" description="NBD2" evidence="1">
    <location>
        <begin position="559"/>
        <end position="771"/>
    </location>
</feature>
<feature type="region of interest" description="C-terminal" evidence="1">
    <location>
        <begin position="772"/>
        <end position="869"/>
    </location>
</feature>
<feature type="coiled-coil region" evidence="1">
    <location>
        <begin position="390"/>
        <end position="524"/>
    </location>
</feature>
<feature type="binding site" evidence="1">
    <location>
        <begin position="205"/>
        <end position="212"/>
    </location>
    <ligand>
        <name>ATP</name>
        <dbReference type="ChEBI" id="CHEBI:30616"/>
        <label>1</label>
    </ligand>
</feature>
<feature type="binding site" evidence="1">
    <location>
        <begin position="609"/>
        <end position="616"/>
    </location>
    <ligand>
        <name>ATP</name>
        <dbReference type="ChEBI" id="CHEBI:30616"/>
        <label>2</label>
    </ligand>
</feature>
<comment type="function">
    <text evidence="1">Part of a stress-induced multi-chaperone system, it is involved in the recovery of the cell from heat-induced damage, in cooperation with DnaK, DnaJ and GrpE. Acts before DnaK, in the processing of protein aggregates. Protein binding stimulates the ATPase activity; ATP hydrolysis unfolds the denatured protein aggregates, which probably helps expose new hydrophobic binding sites on the surface of ClpB-bound aggregates, contributing to the solubilization and refolding of denatured protein aggregates by DnaK (By similarity).</text>
</comment>
<comment type="subunit">
    <text evidence="1">Homohexamer. The oligomerization is ATP-dependent (By similarity).</text>
</comment>
<comment type="subcellular location">
    <subcellularLocation>
        <location evidence="4">Cytoplasm</location>
    </subcellularLocation>
</comment>
<comment type="domain">
    <text evidence="1">The Clp repeat (R) domain probably functions as a substrate-discriminating domain, recruiting aggregated proteins to the ClpB hexamer and/or stabilizing bound proteins. The NBD2 domain is responsible for oligomerization, whereas the NBD1 domain stabilizes the hexamer probably in an ATP-dependent manner. The movement of the coiled-coil domain is essential for ClpB ability to rescue proteins from an aggregated state, probably by pulling apart large aggregated proteins, which are bound between the coiled-coils motifs of adjacent ClpB subunits in the functional hexamer (By similarity).</text>
</comment>
<comment type="similarity">
    <text evidence="4">Belongs to the ClpA/ClpB family.</text>
</comment>
<keyword id="KW-0067">ATP-binding</keyword>
<keyword id="KW-0143">Chaperone</keyword>
<keyword id="KW-0175">Coiled coil</keyword>
<keyword id="KW-0963">Cytoplasm</keyword>
<keyword id="KW-0547">Nucleotide-binding</keyword>
<keyword id="KW-0677">Repeat</keyword>
<keyword id="KW-0346">Stress response</keyword>
<dbReference type="EMBL" id="AE015929">
    <property type="protein sequence ID" value="AAO04271.1"/>
    <property type="molecule type" value="Genomic_DNA"/>
</dbReference>
<dbReference type="RefSeq" id="NP_764229.1">
    <property type="nucleotide sequence ID" value="NC_004461.1"/>
</dbReference>
<dbReference type="RefSeq" id="WP_001829334.1">
    <property type="nucleotide sequence ID" value="NZ_WBME01000074.1"/>
</dbReference>
<dbReference type="SMR" id="Q8CPT5"/>
<dbReference type="KEGG" id="sep:SE_0674"/>
<dbReference type="PATRIC" id="fig|176280.10.peg.648"/>
<dbReference type="eggNOG" id="COG0542">
    <property type="taxonomic scope" value="Bacteria"/>
</dbReference>
<dbReference type="HOGENOM" id="CLU_005070_4_0_9"/>
<dbReference type="OrthoDB" id="9803641at2"/>
<dbReference type="Proteomes" id="UP000001411">
    <property type="component" value="Chromosome"/>
</dbReference>
<dbReference type="GO" id="GO:0005737">
    <property type="term" value="C:cytoplasm"/>
    <property type="evidence" value="ECO:0007669"/>
    <property type="project" value="UniProtKB-SubCell"/>
</dbReference>
<dbReference type="GO" id="GO:0005524">
    <property type="term" value="F:ATP binding"/>
    <property type="evidence" value="ECO:0007669"/>
    <property type="project" value="UniProtKB-KW"/>
</dbReference>
<dbReference type="GO" id="GO:0016887">
    <property type="term" value="F:ATP hydrolysis activity"/>
    <property type="evidence" value="ECO:0007669"/>
    <property type="project" value="InterPro"/>
</dbReference>
<dbReference type="GO" id="GO:0034605">
    <property type="term" value="P:cellular response to heat"/>
    <property type="evidence" value="ECO:0007669"/>
    <property type="project" value="TreeGrafter"/>
</dbReference>
<dbReference type="GO" id="GO:0042026">
    <property type="term" value="P:protein refolding"/>
    <property type="evidence" value="ECO:0007669"/>
    <property type="project" value="InterPro"/>
</dbReference>
<dbReference type="CDD" id="cd00009">
    <property type="entry name" value="AAA"/>
    <property type="match status" value="1"/>
</dbReference>
<dbReference type="CDD" id="cd19499">
    <property type="entry name" value="RecA-like_ClpB_Hsp104-like"/>
    <property type="match status" value="1"/>
</dbReference>
<dbReference type="FunFam" id="3.40.50.300:FF:000120">
    <property type="entry name" value="ATP-dependent chaperone ClpB"/>
    <property type="match status" value="1"/>
</dbReference>
<dbReference type="FunFam" id="3.40.50.300:FF:000025">
    <property type="entry name" value="ATP-dependent Clp protease subunit"/>
    <property type="match status" value="1"/>
</dbReference>
<dbReference type="FunFam" id="3.40.50.300:FF:000010">
    <property type="entry name" value="Chaperone clpB 1, putative"/>
    <property type="match status" value="1"/>
</dbReference>
<dbReference type="Gene3D" id="1.10.8.60">
    <property type="match status" value="1"/>
</dbReference>
<dbReference type="Gene3D" id="1.10.1780.10">
    <property type="entry name" value="Clp, N-terminal domain"/>
    <property type="match status" value="1"/>
</dbReference>
<dbReference type="Gene3D" id="3.40.50.300">
    <property type="entry name" value="P-loop containing nucleotide triphosphate hydrolases"/>
    <property type="match status" value="3"/>
</dbReference>
<dbReference type="InterPro" id="IPR003593">
    <property type="entry name" value="AAA+_ATPase"/>
</dbReference>
<dbReference type="InterPro" id="IPR003959">
    <property type="entry name" value="ATPase_AAA_core"/>
</dbReference>
<dbReference type="InterPro" id="IPR017730">
    <property type="entry name" value="Chaperonin_ClpB"/>
</dbReference>
<dbReference type="InterPro" id="IPR019489">
    <property type="entry name" value="Clp_ATPase_C"/>
</dbReference>
<dbReference type="InterPro" id="IPR036628">
    <property type="entry name" value="Clp_N_dom_sf"/>
</dbReference>
<dbReference type="InterPro" id="IPR004176">
    <property type="entry name" value="Clp_R_dom"/>
</dbReference>
<dbReference type="InterPro" id="IPR001270">
    <property type="entry name" value="ClpA/B"/>
</dbReference>
<dbReference type="InterPro" id="IPR018368">
    <property type="entry name" value="ClpA/B_CS1"/>
</dbReference>
<dbReference type="InterPro" id="IPR028299">
    <property type="entry name" value="ClpA/B_CS2"/>
</dbReference>
<dbReference type="InterPro" id="IPR041546">
    <property type="entry name" value="ClpA/ClpB_AAA_lid"/>
</dbReference>
<dbReference type="InterPro" id="IPR050130">
    <property type="entry name" value="ClpA_ClpB"/>
</dbReference>
<dbReference type="InterPro" id="IPR027417">
    <property type="entry name" value="P-loop_NTPase"/>
</dbReference>
<dbReference type="NCBIfam" id="TIGR03346">
    <property type="entry name" value="chaperone_ClpB"/>
    <property type="match status" value="1"/>
</dbReference>
<dbReference type="PANTHER" id="PTHR11638">
    <property type="entry name" value="ATP-DEPENDENT CLP PROTEASE"/>
    <property type="match status" value="1"/>
</dbReference>
<dbReference type="PANTHER" id="PTHR11638:SF18">
    <property type="entry name" value="HEAT SHOCK PROTEIN 104"/>
    <property type="match status" value="1"/>
</dbReference>
<dbReference type="Pfam" id="PF00004">
    <property type="entry name" value="AAA"/>
    <property type="match status" value="1"/>
</dbReference>
<dbReference type="Pfam" id="PF07724">
    <property type="entry name" value="AAA_2"/>
    <property type="match status" value="1"/>
</dbReference>
<dbReference type="Pfam" id="PF17871">
    <property type="entry name" value="AAA_lid_9"/>
    <property type="match status" value="1"/>
</dbReference>
<dbReference type="Pfam" id="PF02861">
    <property type="entry name" value="Clp_N"/>
    <property type="match status" value="2"/>
</dbReference>
<dbReference type="Pfam" id="PF10431">
    <property type="entry name" value="ClpB_D2-small"/>
    <property type="match status" value="1"/>
</dbReference>
<dbReference type="PRINTS" id="PR00300">
    <property type="entry name" value="CLPPROTEASEA"/>
</dbReference>
<dbReference type="SMART" id="SM00382">
    <property type="entry name" value="AAA"/>
    <property type="match status" value="2"/>
</dbReference>
<dbReference type="SMART" id="SM01086">
    <property type="entry name" value="ClpB_D2-small"/>
    <property type="match status" value="1"/>
</dbReference>
<dbReference type="SUPFAM" id="SSF81923">
    <property type="entry name" value="Double Clp-N motif"/>
    <property type="match status" value="1"/>
</dbReference>
<dbReference type="SUPFAM" id="SSF52540">
    <property type="entry name" value="P-loop containing nucleoside triphosphate hydrolases"/>
    <property type="match status" value="2"/>
</dbReference>
<dbReference type="PROSITE" id="PS51903">
    <property type="entry name" value="CLP_R"/>
    <property type="match status" value="1"/>
</dbReference>
<dbReference type="PROSITE" id="PS00870">
    <property type="entry name" value="CLPAB_1"/>
    <property type="match status" value="1"/>
</dbReference>
<dbReference type="PROSITE" id="PS00871">
    <property type="entry name" value="CLPAB_2"/>
    <property type="match status" value="1"/>
</dbReference>
<gene>
    <name type="primary">clpB</name>
    <name type="ordered locus">SE_0674</name>
</gene>
<organism>
    <name type="scientific">Staphylococcus epidermidis (strain ATCC 12228 / FDA PCI 1200)</name>
    <dbReference type="NCBI Taxonomy" id="176280"/>
    <lineage>
        <taxon>Bacteria</taxon>
        <taxon>Bacillati</taxon>
        <taxon>Bacillota</taxon>
        <taxon>Bacilli</taxon>
        <taxon>Bacillales</taxon>
        <taxon>Staphylococcaceae</taxon>
        <taxon>Staphylococcus</taxon>
    </lineage>
</organism>
<evidence type="ECO:0000250" key="1"/>
<evidence type="ECO:0000255" key="2">
    <source>
        <dbReference type="PROSITE-ProRule" id="PRU01251"/>
    </source>
</evidence>
<evidence type="ECO:0000256" key="3">
    <source>
        <dbReference type="SAM" id="MobiDB-lite"/>
    </source>
</evidence>
<evidence type="ECO:0000305" key="4"/>
<reference key="1">
    <citation type="journal article" date="2003" name="Mol. Microbiol.">
        <title>Genome-based analysis of virulence genes in a non-biofilm-forming Staphylococcus epidermidis strain (ATCC 12228).</title>
        <authorList>
            <person name="Zhang Y.-Q."/>
            <person name="Ren S.-X."/>
            <person name="Li H.-L."/>
            <person name="Wang Y.-X."/>
            <person name="Fu G."/>
            <person name="Yang J."/>
            <person name="Qin Z.-Q."/>
            <person name="Miao Y.-G."/>
            <person name="Wang W.-Y."/>
            <person name="Chen R.-S."/>
            <person name="Shen Y."/>
            <person name="Chen Z."/>
            <person name="Yuan Z.-H."/>
            <person name="Zhao G.-P."/>
            <person name="Qu D."/>
            <person name="Danchin A."/>
            <person name="Wen Y.-M."/>
        </authorList>
    </citation>
    <scope>NUCLEOTIDE SEQUENCE [LARGE SCALE GENOMIC DNA]</scope>
    <source>
        <strain>ATCC 12228 / FDA PCI 1200</strain>
    </source>
</reference>
<accession>Q8CPT5</accession>
<proteinExistence type="inferred from homology"/>